<evidence type="ECO:0000250" key="1"/>
<evidence type="ECO:0000256" key="2">
    <source>
        <dbReference type="SAM" id="MobiDB-lite"/>
    </source>
</evidence>
<evidence type="ECO:0000305" key="3"/>
<reference key="1">
    <citation type="journal article" date="2005" name="Science">
        <title>The genome of the basidiomycetous yeast and human pathogen Cryptococcus neoformans.</title>
        <authorList>
            <person name="Loftus B.J."/>
            <person name="Fung E."/>
            <person name="Roncaglia P."/>
            <person name="Rowley D."/>
            <person name="Amedeo P."/>
            <person name="Bruno D."/>
            <person name="Vamathevan J."/>
            <person name="Miranda M."/>
            <person name="Anderson I.J."/>
            <person name="Fraser J.A."/>
            <person name="Allen J.E."/>
            <person name="Bosdet I.E."/>
            <person name="Brent M.R."/>
            <person name="Chiu R."/>
            <person name="Doering T.L."/>
            <person name="Donlin M.J."/>
            <person name="D'Souza C.A."/>
            <person name="Fox D.S."/>
            <person name="Grinberg V."/>
            <person name="Fu J."/>
            <person name="Fukushima M."/>
            <person name="Haas B.J."/>
            <person name="Huang J.C."/>
            <person name="Janbon G."/>
            <person name="Jones S.J.M."/>
            <person name="Koo H.L."/>
            <person name="Krzywinski M.I."/>
            <person name="Kwon-Chung K.J."/>
            <person name="Lengeler K.B."/>
            <person name="Maiti R."/>
            <person name="Marra M.A."/>
            <person name="Marra R.E."/>
            <person name="Mathewson C.A."/>
            <person name="Mitchell T.G."/>
            <person name="Pertea M."/>
            <person name="Riggs F.R."/>
            <person name="Salzberg S.L."/>
            <person name="Schein J.E."/>
            <person name="Shvartsbeyn A."/>
            <person name="Shin H."/>
            <person name="Shumway M."/>
            <person name="Specht C.A."/>
            <person name="Suh B.B."/>
            <person name="Tenney A."/>
            <person name="Utterback T.R."/>
            <person name="Wickes B.L."/>
            <person name="Wortman J.R."/>
            <person name="Wye N.H."/>
            <person name="Kronstad J.W."/>
            <person name="Lodge J.K."/>
            <person name="Heitman J."/>
            <person name="Davis R.W."/>
            <person name="Fraser C.M."/>
            <person name="Hyman R.W."/>
        </authorList>
    </citation>
    <scope>NUCLEOTIDE SEQUENCE [LARGE SCALE GENOMIC DNA]</scope>
    <source>
        <strain>JEC21 / ATCC MYA-565</strain>
    </source>
</reference>
<feature type="chain" id="PRO_0000084818" description="Pre-mRNA-processing protein 45">
    <location>
        <begin position="1"/>
        <end position="574"/>
    </location>
</feature>
<feature type="region of interest" description="Disordered" evidence="2">
    <location>
        <begin position="1"/>
        <end position="46"/>
    </location>
</feature>
<feature type="region of interest" description="Disordered" evidence="2">
    <location>
        <begin position="203"/>
        <end position="234"/>
    </location>
</feature>
<feature type="region of interest" description="Disordered" evidence="2">
    <location>
        <begin position="350"/>
        <end position="406"/>
    </location>
</feature>
<feature type="region of interest" description="Disordered" evidence="2">
    <location>
        <begin position="478"/>
        <end position="503"/>
    </location>
</feature>
<feature type="region of interest" description="Disordered" evidence="2">
    <location>
        <begin position="549"/>
        <end position="574"/>
    </location>
</feature>
<feature type="compositionally biased region" description="Pro residues" evidence="2">
    <location>
        <begin position="24"/>
        <end position="33"/>
    </location>
</feature>
<feature type="compositionally biased region" description="Pro residues" evidence="2">
    <location>
        <begin position="215"/>
        <end position="224"/>
    </location>
</feature>
<feature type="compositionally biased region" description="Acidic residues" evidence="2">
    <location>
        <begin position="363"/>
        <end position="377"/>
    </location>
</feature>
<feature type="compositionally biased region" description="Basic and acidic residues" evidence="2">
    <location>
        <begin position="378"/>
        <end position="397"/>
    </location>
</feature>
<feature type="compositionally biased region" description="Basic and acidic residues" evidence="2">
    <location>
        <begin position="493"/>
        <end position="503"/>
    </location>
</feature>
<feature type="compositionally biased region" description="Basic and acidic residues" evidence="2">
    <location>
        <begin position="558"/>
        <end position="574"/>
    </location>
</feature>
<protein>
    <recommendedName>
        <fullName>Pre-mRNA-processing protein 45</fullName>
    </recommendedName>
</protein>
<accession>P0CR56</accession>
<accession>Q55JA7</accession>
<accession>Q5KCF5</accession>
<name>PRP45_CRYNJ</name>
<organism>
    <name type="scientific">Cryptococcus neoformans var. neoformans serotype D (strain JEC21 / ATCC MYA-565)</name>
    <name type="common">Filobasidiella neoformans</name>
    <dbReference type="NCBI Taxonomy" id="214684"/>
    <lineage>
        <taxon>Eukaryota</taxon>
        <taxon>Fungi</taxon>
        <taxon>Dikarya</taxon>
        <taxon>Basidiomycota</taxon>
        <taxon>Agaricomycotina</taxon>
        <taxon>Tremellomycetes</taxon>
        <taxon>Tremellales</taxon>
        <taxon>Cryptococcaceae</taxon>
        <taxon>Cryptococcus</taxon>
        <taxon>Cryptococcus neoformans species complex</taxon>
    </lineage>
</organism>
<dbReference type="EMBL" id="AE017348">
    <property type="protein sequence ID" value="AAW44969.2"/>
    <property type="molecule type" value="Genomic_DNA"/>
</dbReference>
<dbReference type="RefSeq" id="XP_572276.1">
    <property type="nucleotide sequence ID" value="XM_572276.1"/>
</dbReference>
<dbReference type="SMR" id="P0CR56"/>
<dbReference type="FunCoup" id="P0CR56">
    <property type="interactions" value="763"/>
</dbReference>
<dbReference type="STRING" id="214684.P0CR56"/>
<dbReference type="PaxDb" id="214684-P0CR56"/>
<dbReference type="EnsemblFungi" id="AAW44969">
    <property type="protein sequence ID" value="AAW44969"/>
    <property type="gene ID" value="CNH00830"/>
</dbReference>
<dbReference type="GeneID" id="3259100"/>
<dbReference type="KEGG" id="cne:CNH00830"/>
<dbReference type="eggNOG" id="KOG2441">
    <property type="taxonomic scope" value="Eukaryota"/>
</dbReference>
<dbReference type="HOGENOM" id="CLU_006601_2_0_1"/>
<dbReference type="InParanoid" id="P0CR56"/>
<dbReference type="OrthoDB" id="666364at2759"/>
<dbReference type="Proteomes" id="UP000002149">
    <property type="component" value="Chromosome 8"/>
</dbReference>
<dbReference type="GO" id="GO:0005681">
    <property type="term" value="C:spliceosomal complex"/>
    <property type="evidence" value="ECO:0007669"/>
    <property type="project" value="UniProtKB-KW"/>
</dbReference>
<dbReference type="GO" id="GO:0000398">
    <property type="term" value="P:mRNA splicing, via spliceosome"/>
    <property type="evidence" value="ECO:0007669"/>
    <property type="project" value="InterPro"/>
</dbReference>
<dbReference type="InterPro" id="IPR017862">
    <property type="entry name" value="SKI-int_prot_SKIP"/>
</dbReference>
<dbReference type="InterPro" id="IPR004015">
    <property type="entry name" value="SKI-int_prot_SKIP_SNW-dom"/>
</dbReference>
<dbReference type="PANTHER" id="PTHR12096">
    <property type="entry name" value="NUCLEAR PROTEIN SKIP-RELATED"/>
    <property type="match status" value="1"/>
</dbReference>
<dbReference type="Pfam" id="PF02731">
    <property type="entry name" value="SKIP_SNW"/>
    <property type="match status" value="1"/>
</dbReference>
<proteinExistence type="inferred from homology"/>
<gene>
    <name type="primary">PRP45</name>
    <name type="ordered locus">CNH00830</name>
</gene>
<sequence>MAALTRALPAPLHTSTTEYEEAPAPLPTTPGPQLPKYGQRKGWKPKTAADFNGGGAYPECHVAQYPLDMGKKNKGQGSTLALQVDQDGLVRYDAIAQHGRAPGSRVQSSFKDLVPLANRTDVTESERQMERPDDLSVAETAERTRLALERITHGKIKAAQPKHVPKTNSDATYIRYTPANQSADEGKQRIIKMTEVQEDPLEPPRFKHKKIPRGPAEPPPPVLQSPPRAATAQDQKDWMIPPCISNWKNNKGYTIPLDKRLAADGRGLQDVHINDNFAKFSESLYIADRHIREEVRARAQLQQLLAQKQKTSKEEELRLLAQRAREDRSGLSSSVSGSVAAASASRLPAETGINLGGYGSESGSEEESDEEEEDEEAIRERNIVREEKRREREKEMRMSNMGSEMRAKMLAKEANRDISEKIALGLAKPSASKETLLDSRLFNREALSTGFASEDSYNLYDKPLFAGSSAAAAIYRPAGSSRNDESFGGGTEEGIKEEMSKDRFQLGNATRGFEGAEGVEAREGPVQFEKDTIVALDGSADPFGVEQFMDAARRGGKRTAEDRDEERRKRARDE</sequence>
<comment type="function">
    <text evidence="1">Involved in pre-mRNA splicing.</text>
</comment>
<comment type="subunit">
    <text evidence="1">Associated with the spliceosome.</text>
</comment>
<comment type="subcellular location">
    <subcellularLocation>
        <location evidence="1">Nucleus</location>
    </subcellularLocation>
</comment>
<comment type="similarity">
    <text evidence="3">Belongs to the SNW family.</text>
</comment>
<keyword id="KW-0507">mRNA processing</keyword>
<keyword id="KW-0508">mRNA splicing</keyword>
<keyword id="KW-0539">Nucleus</keyword>
<keyword id="KW-1185">Reference proteome</keyword>
<keyword id="KW-0747">Spliceosome</keyword>